<reference key="1">
    <citation type="journal article" date="1988" name="Mol. Microbiol.">
        <title>Characterization of the Rhizobium leguminosarum genes nodLMN involved in efficient host-specific nodulation.</title>
        <authorList>
            <person name="Surin B.P."/>
            <person name="Downie J.A."/>
        </authorList>
    </citation>
    <scope>NUCLEOTIDE SEQUENCE [GENOMIC DNA]</scope>
    <source>
        <strain>248</strain>
    </source>
</reference>
<sequence length="161" mass="18031">MHELSLADVPSRIGQELGKSEWITVDQTTIDLFADATHDHQFIHVHPERAAVESPFGGTIAHGFLTLSLLSAMNFSGMPKIREQTMGLNYGLDRVRFMSPVKTGSRVRGRFVLSECQFRGASMLVTTYEVTVEIENENRPALTANWITIIQFDPNDRPKGI</sequence>
<evidence type="ECO:0000305" key="1"/>
<geneLocation type="plasmid">
    <name>sym pRL1JI</name>
</geneLocation>
<dbReference type="EMBL" id="Y00548">
    <property type="protein sequence ID" value="CAA68627.1"/>
    <property type="molecule type" value="Genomic_DNA"/>
</dbReference>
<dbReference type="PIR" id="S01041">
    <property type="entry name" value="S01041"/>
</dbReference>
<dbReference type="RefSeq" id="WP_011654219.1">
    <property type="nucleotide sequence ID" value="NZ_WIFB01000040.1"/>
</dbReference>
<dbReference type="SMR" id="P08634"/>
<dbReference type="OMA" id="CVVDTIA"/>
<dbReference type="CDD" id="cd03450">
    <property type="entry name" value="NodN"/>
    <property type="match status" value="1"/>
</dbReference>
<dbReference type="Gene3D" id="3.10.129.10">
    <property type="entry name" value="Hotdog Thioesterase"/>
    <property type="match status" value="1"/>
</dbReference>
<dbReference type="InterPro" id="IPR029069">
    <property type="entry name" value="HotDog_dom_sf"/>
</dbReference>
<dbReference type="InterPro" id="IPR002539">
    <property type="entry name" value="MaoC-like_dom"/>
</dbReference>
<dbReference type="InterPro" id="IPR039375">
    <property type="entry name" value="NodN-like"/>
</dbReference>
<dbReference type="PANTHER" id="PTHR42993">
    <property type="entry name" value="MAOC-LIKE DEHYDRATASE DOMAIN-CONTAINING PROTEIN"/>
    <property type="match status" value="1"/>
</dbReference>
<dbReference type="PANTHER" id="PTHR42993:SF1">
    <property type="entry name" value="MAOC-LIKE DEHYDRATASE DOMAIN-CONTAINING PROTEIN"/>
    <property type="match status" value="1"/>
</dbReference>
<dbReference type="Pfam" id="PF01575">
    <property type="entry name" value="MaoC_dehydratas"/>
    <property type="match status" value="1"/>
</dbReference>
<dbReference type="SUPFAM" id="SSF54637">
    <property type="entry name" value="Thioesterase/thiol ester dehydrase-isomerase"/>
    <property type="match status" value="1"/>
</dbReference>
<feature type="chain" id="PRO_0000096909" description="Nodulation protein N">
    <location>
        <begin position="1"/>
        <end position="161"/>
    </location>
</feature>
<feature type="domain" description="MaoC-like">
    <location>
        <begin position="9"/>
        <end position="133"/>
    </location>
</feature>
<keyword id="KW-0536">Nodulation</keyword>
<keyword id="KW-0614">Plasmid</keyword>
<protein>
    <recommendedName>
        <fullName>Nodulation protein N</fullName>
    </recommendedName>
</protein>
<gene>
    <name type="primary">nodN</name>
</gene>
<name>NODN_RHILV</name>
<comment type="function">
    <text>Involved in the production of the root hair deformation (HAD) factor specifically on medicago.</text>
</comment>
<comment type="similarity">
    <text evidence="1">To the R.meliloti counterpart.</text>
</comment>
<accession>P08634</accession>
<proteinExistence type="predicted"/>
<organism>
    <name type="scientific">Rhizobium leguminosarum bv. viciae</name>
    <dbReference type="NCBI Taxonomy" id="387"/>
    <lineage>
        <taxon>Bacteria</taxon>
        <taxon>Pseudomonadati</taxon>
        <taxon>Pseudomonadota</taxon>
        <taxon>Alphaproteobacteria</taxon>
        <taxon>Hyphomicrobiales</taxon>
        <taxon>Rhizobiaceae</taxon>
        <taxon>Rhizobium/Agrobacterium group</taxon>
        <taxon>Rhizobium</taxon>
    </lineage>
</organism>